<name>KAD_CAMC1</name>
<gene>
    <name evidence="1" type="primary">adk</name>
    <name type="ordered locus">Ccon26_13330</name>
    <name type="ORF">CCC13826_1980</name>
</gene>
<organism>
    <name type="scientific">Campylobacter concisus (strain 13826)</name>
    <dbReference type="NCBI Taxonomy" id="360104"/>
    <lineage>
        <taxon>Bacteria</taxon>
        <taxon>Pseudomonadati</taxon>
        <taxon>Campylobacterota</taxon>
        <taxon>Epsilonproteobacteria</taxon>
        <taxon>Campylobacterales</taxon>
        <taxon>Campylobacteraceae</taxon>
        <taxon>Campylobacter</taxon>
    </lineage>
</organism>
<feature type="chain" id="PRO_1000071795" description="Adenylate kinase">
    <location>
        <begin position="1"/>
        <end position="189"/>
    </location>
</feature>
<feature type="region of interest" description="NMP" evidence="1">
    <location>
        <begin position="33"/>
        <end position="62"/>
    </location>
</feature>
<feature type="region of interest" description="LID" evidence="1">
    <location>
        <begin position="129"/>
        <end position="135"/>
    </location>
</feature>
<feature type="binding site" evidence="1">
    <location>
        <begin position="12"/>
        <end position="17"/>
    </location>
    <ligand>
        <name>ATP</name>
        <dbReference type="ChEBI" id="CHEBI:30616"/>
    </ligand>
</feature>
<feature type="binding site" evidence="1">
    <location>
        <position position="34"/>
    </location>
    <ligand>
        <name>AMP</name>
        <dbReference type="ChEBI" id="CHEBI:456215"/>
    </ligand>
</feature>
<feature type="binding site" evidence="1">
    <location>
        <position position="39"/>
    </location>
    <ligand>
        <name>AMP</name>
        <dbReference type="ChEBI" id="CHEBI:456215"/>
    </ligand>
</feature>
<feature type="binding site" evidence="1">
    <location>
        <begin position="60"/>
        <end position="62"/>
    </location>
    <ligand>
        <name>AMP</name>
        <dbReference type="ChEBI" id="CHEBI:456215"/>
    </ligand>
</feature>
<feature type="binding site" evidence="1">
    <location>
        <begin position="87"/>
        <end position="90"/>
    </location>
    <ligand>
        <name>AMP</name>
        <dbReference type="ChEBI" id="CHEBI:456215"/>
    </ligand>
</feature>
<feature type="binding site" evidence="1">
    <location>
        <position position="94"/>
    </location>
    <ligand>
        <name>AMP</name>
        <dbReference type="ChEBI" id="CHEBI:456215"/>
    </ligand>
</feature>
<feature type="binding site" evidence="1">
    <location>
        <position position="130"/>
    </location>
    <ligand>
        <name>ATP</name>
        <dbReference type="ChEBI" id="CHEBI:30616"/>
    </ligand>
</feature>
<feature type="binding site" evidence="1">
    <location>
        <position position="132"/>
    </location>
    <ligand>
        <name>AMP</name>
        <dbReference type="ChEBI" id="CHEBI:456215"/>
    </ligand>
</feature>
<feature type="binding site" evidence="1">
    <location>
        <position position="144"/>
    </location>
    <ligand>
        <name>AMP</name>
        <dbReference type="ChEBI" id="CHEBI:456215"/>
    </ligand>
</feature>
<feature type="binding site" evidence="1">
    <location>
        <position position="172"/>
    </location>
    <ligand>
        <name>ATP</name>
        <dbReference type="ChEBI" id="CHEBI:30616"/>
    </ligand>
</feature>
<dbReference type="EC" id="2.7.4.3" evidence="1"/>
<dbReference type="EMBL" id="CP000792">
    <property type="protein sequence ID" value="EAT98699.1"/>
    <property type="molecule type" value="Genomic_DNA"/>
</dbReference>
<dbReference type="RefSeq" id="WP_012140087.1">
    <property type="nucleotide sequence ID" value="NC_009802.2"/>
</dbReference>
<dbReference type="SMR" id="A7ZEH4"/>
<dbReference type="STRING" id="360104.CCC13826_1980"/>
<dbReference type="KEGG" id="cco:CCC13826_1980"/>
<dbReference type="eggNOG" id="COG0563">
    <property type="taxonomic scope" value="Bacteria"/>
</dbReference>
<dbReference type="HOGENOM" id="CLU_032354_4_1_7"/>
<dbReference type="OrthoDB" id="9805030at2"/>
<dbReference type="UniPathway" id="UPA00588">
    <property type="reaction ID" value="UER00649"/>
</dbReference>
<dbReference type="Proteomes" id="UP000001121">
    <property type="component" value="Chromosome"/>
</dbReference>
<dbReference type="GO" id="GO:0005737">
    <property type="term" value="C:cytoplasm"/>
    <property type="evidence" value="ECO:0007669"/>
    <property type="project" value="UniProtKB-SubCell"/>
</dbReference>
<dbReference type="GO" id="GO:0004017">
    <property type="term" value="F:adenylate kinase activity"/>
    <property type="evidence" value="ECO:0007669"/>
    <property type="project" value="UniProtKB-UniRule"/>
</dbReference>
<dbReference type="GO" id="GO:0005524">
    <property type="term" value="F:ATP binding"/>
    <property type="evidence" value="ECO:0007669"/>
    <property type="project" value="UniProtKB-UniRule"/>
</dbReference>
<dbReference type="GO" id="GO:0044209">
    <property type="term" value="P:AMP salvage"/>
    <property type="evidence" value="ECO:0007669"/>
    <property type="project" value="UniProtKB-UniRule"/>
</dbReference>
<dbReference type="CDD" id="cd01428">
    <property type="entry name" value="ADK"/>
    <property type="match status" value="1"/>
</dbReference>
<dbReference type="Gene3D" id="3.40.50.300">
    <property type="entry name" value="P-loop containing nucleotide triphosphate hydrolases"/>
    <property type="match status" value="1"/>
</dbReference>
<dbReference type="HAMAP" id="MF_00235">
    <property type="entry name" value="Adenylate_kinase_Adk"/>
    <property type="match status" value="1"/>
</dbReference>
<dbReference type="InterPro" id="IPR000850">
    <property type="entry name" value="Adenylat/UMP-CMP_kin"/>
</dbReference>
<dbReference type="InterPro" id="IPR033690">
    <property type="entry name" value="Adenylat_kinase_CS"/>
</dbReference>
<dbReference type="InterPro" id="IPR027417">
    <property type="entry name" value="P-loop_NTPase"/>
</dbReference>
<dbReference type="NCBIfam" id="NF001384">
    <property type="entry name" value="PRK00279.2-2"/>
    <property type="match status" value="1"/>
</dbReference>
<dbReference type="PANTHER" id="PTHR23359">
    <property type="entry name" value="NUCLEOTIDE KINASE"/>
    <property type="match status" value="1"/>
</dbReference>
<dbReference type="Pfam" id="PF00406">
    <property type="entry name" value="ADK"/>
    <property type="match status" value="1"/>
</dbReference>
<dbReference type="PRINTS" id="PR00094">
    <property type="entry name" value="ADENYLTKNASE"/>
</dbReference>
<dbReference type="SUPFAM" id="SSF52540">
    <property type="entry name" value="P-loop containing nucleoside triphosphate hydrolases"/>
    <property type="match status" value="1"/>
</dbReference>
<dbReference type="PROSITE" id="PS00113">
    <property type="entry name" value="ADENYLATE_KINASE"/>
    <property type="match status" value="1"/>
</dbReference>
<proteinExistence type="inferred from homology"/>
<protein>
    <recommendedName>
        <fullName evidence="1">Adenylate kinase</fullName>
        <shortName evidence="1">AK</shortName>
        <ecNumber evidence="1">2.7.4.3</ecNumber>
    </recommendedName>
    <alternativeName>
        <fullName evidence="1">ATP-AMP transphosphorylase</fullName>
    </alternativeName>
    <alternativeName>
        <fullName evidence="1">ATP:AMP phosphotransferase</fullName>
    </alternativeName>
    <alternativeName>
        <fullName evidence="1">Adenylate monophosphate kinase</fullName>
    </alternativeName>
</protein>
<reference key="1">
    <citation type="submission" date="2007-10" db="EMBL/GenBank/DDBJ databases">
        <title>Genome sequence of Campylobacter concisus 13826 isolated from human feces.</title>
        <authorList>
            <person name="Fouts D.E."/>
            <person name="Mongodin E.F."/>
            <person name="Puiu D."/>
            <person name="Sebastian Y."/>
            <person name="Miller W.G."/>
            <person name="Mandrell R.E."/>
            <person name="On S."/>
            <person name="Nelson K.E."/>
        </authorList>
    </citation>
    <scope>NUCLEOTIDE SEQUENCE [LARGE SCALE GENOMIC DNA]</scope>
    <source>
        <strain>13826</strain>
    </source>
</reference>
<comment type="function">
    <text evidence="1">Catalyzes the reversible transfer of the terminal phosphate group between ATP and AMP. Plays an important role in cellular energy homeostasis and in adenine nucleotide metabolism.</text>
</comment>
<comment type="catalytic activity">
    <reaction evidence="1">
        <text>AMP + ATP = 2 ADP</text>
        <dbReference type="Rhea" id="RHEA:12973"/>
        <dbReference type="ChEBI" id="CHEBI:30616"/>
        <dbReference type="ChEBI" id="CHEBI:456215"/>
        <dbReference type="ChEBI" id="CHEBI:456216"/>
        <dbReference type="EC" id="2.7.4.3"/>
    </reaction>
</comment>
<comment type="pathway">
    <text evidence="1">Purine metabolism; AMP biosynthesis via salvage pathway; AMP from ADP: step 1/1.</text>
</comment>
<comment type="subunit">
    <text evidence="1">Monomer.</text>
</comment>
<comment type="subcellular location">
    <subcellularLocation>
        <location evidence="1">Cytoplasm</location>
    </subcellularLocation>
</comment>
<comment type="domain">
    <text evidence="1">Consists of three domains, a large central CORE domain and two small peripheral domains, NMPbind and LID, which undergo movements during catalysis. The LID domain closes over the site of phosphoryl transfer upon ATP binding. Assembling and dissambling the active center during each catalytic cycle provides an effective means to prevent ATP hydrolysis.</text>
</comment>
<comment type="similarity">
    <text evidence="1">Belongs to the adenylate kinase family.</text>
</comment>
<evidence type="ECO:0000255" key="1">
    <source>
        <dbReference type="HAMAP-Rule" id="MF_00235"/>
    </source>
</evidence>
<sequence>MKNLFLIIGAPGSGKTTDASLIAQHDEKFAHFSTGDLLRAEVASGSELGKLIDGFISKGNLVPLDVVVNAIVSAIKSSNKSNIIIDGYPRSVEQMTELDKVLSEQDEISLKGVIEVDVSEDVARARVLGRARGADDNNEVFNNRMKVYLDPIKPIRKFYSEKELLHVVNGERGIDEIVADIKNLLAKLI</sequence>
<keyword id="KW-0067">ATP-binding</keyword>
<keyword id="KW-0963">Cytoplasm</keyword>
<keyword id="KW-0418">Kinase</keyword>
<keyword id="KW-0545">Nucleotide biosynthesis</keyword>
<keyword id="KW-0547">Nucleotide-binding</keyword>
<keyword id="KW-0808">Transferase</keyword>
<accession>A7ZEH4</accession>